<gene>
    <name type="primary">WNT-5(III)</name>
</gene>
<accession>P28121</accession>
<feature type="chain" id="PRO_0000200637" description="Protein Wnt-5(III)">
    <location>
        <begin position="1" status="less than"/>
        <end position="116" status="greater than"/>
    </location>
</feature>
<feature type="lipid moiety-binding region" description="O-palmitoleoyl serine; by PORCN" evidence="3">
    <location>
        <position position="1"/>
    </location>
</feature>
<feature type="glycosylation site" description="N-linked (GlcNAc...) asparagine" evidence="4">
    <location>
        <position position="69"/>
    </location>
</feature>
<feature type="disulfide bond" evidence="2">
    <location>
        <begin position="82"/>
        <end position="97"/>
    </location>
</feature>
<feature type="non-terminal residue">
    <location>
        <position position="1"/>
    </location>
</feature>
<feature type="non-terminal residue">
    <location>
        <position position="116"/>
    </location>
</feature>
<keyword id="KW-0217">Developmental protein</keyword>
<keyword id="KW-1015">Disulfide bond</keyword>
<keyword id="KW-0272">Extracellular matrix</keyword>
<keyword id="KW-0325">Glycoprotein</keyword>
<keyword id="KW-0449">Lipoprotein</keyword>
<keyword id="KW-0964">Secreted</keyword>
<keyword id="KW-0879">Wnt signaling pathway</keyword>
<sequence>SGSCSLKTCWLQLADFRSVGTQLKERYDLAKVVRVTRKSRLEPRNRKLGTPTPTDLVHLESSPDYCARNGSSGSLGTIGRECDKRSAGMDGCQLMCCGRGYDHFKVTVTQRCNCKF</sequence>
<dbReference type="EMBL" id="M91268">
    <property type="protein sequence ID" value="AAA49249.1"/>
    <property type="molecule type" value="Genomic_DNA"/>
</dbReference>
<dbReference type="SMR" id="P28121"/>
<dbReference type="GlyCosmos" id="P28121">
    <property type="glycosylation" value="1 site, No reported glycans"/>
</dbReference>
<dbReference type="GO" id="GO:0005615">
    <property type="term" value="C:extracellular space"/>
    <property type="evidence" value="ECO:0007669"/>
    <property type="project" value="TreeGrafter"/>
</dbReference>
<dbReference type="GO" id="GO:0005125">
    <property type="term" value="F:cytokine activity"/>
    <property type="evidence" value="ECO:0007669"/>
    <property type="project" value="TreeGrafter"/>
</dbReference>
<dbReference type="GO" id="GO:0005109">
    <property type="term" value="F:frizzled binding"/>
    <property type="evidence" value="ECO:0007669"/>
    <property type="project" value="TreeGrafter"/>
</dbReference>
<dbReference type="GO" id="GO:0060070">
    <property type="term" value="P:canonical Wnt signaling pathway"/>
    <property type="evidence" value="ECO:0007669"/>
    <property type="project" value="TreeGrafter"/>
</dbReference>
<dbReference type="GO" id="GO:0045165">
    <property type="term" value="P:cell fate commitment"/>
    <property type="evidence" value="ECO:0007669"/>
    <property type="project" value="TreeGrafter"/>
</dbReference>
<dbReference type="GO" id="GO:0030182">
    <property type="term" value="P:neuron differentiation"/>
    <property type="evidence" value="ECO:0007669"/>
    <property type="project" value="TreeGrafter"/>
</dbReference>
<dbReference type="Gene3D" id="3.30.2460.20">
    <property type="match status" value="1"/>
</dbReference>
<dbReference type="InterPro" id="IPR005817">
    <property type="entry name" value="Wnt"/>
</dbReference>
<dbReference type="InterPro" id="IPR043158">
    <property type="entry name" value="Wnt_C"/>
</dbReference>
<dbReference type="PANTHER" id="PTHR12027:SF77">
    <property type="entry name" value="PROTEIN WNT-5"/>
    <property type="match status" value="1"/>
</dbReference>
<dbReference type="PANTHER" id="PTHR12027">
    <property type="entry name" value="WNT RELATED"/>
    <property type="match status" value="1"/>
</dbReference>
<dbReference type="Pfam" id="PF00110">
    <property type="entry name" value="wnt"/>
    <property type="match status" value="1"/>
</dbReference>
<dbReference type="SMART" id="SM00097">
    <property type="entry name" value="WNT1"/>
    <property type="match status" value="1"/>
</dbReference>
<organism>
    <name type="scientific">Eptatretus stoutii</name>
    <name type="common">Pacific hagfish</name>
    <dbReference type="NCBI Taxonomy" id="7765"/>
    <lineage>
        <taxon>Eukaryota</taxon>
        <taxon>Metazoa</taxon>
        <taxon>Chordata</taxon>
        <taxon>Craniata</taxon>
        <taxon>Vertebrata</taxon>
        <taxon>Cyclostomata</taxon>
        <taxon>Myxini</taxon>
        <taxon>Myxiniformes</taxon>
        <taxon>Myxinidae</taxon>
        <taxon>Eptatretinae</taxon>
        <taxon>Eptatretus</taxon>
    </lineage>
</organism>
<name>WNT53_EPTST</name>
<comment type="function">
    <text>Ligand for members of the frizzled family of seven transmembrane receptors. Probable developmental protein. May be a signaling molecule which affects the development of discrete regions of tissues. Is likely to signal over only few cell diameters.</text>
</comment>
<comment type="subcellular location">
    <subcellularLocation>
        <location>Secreted</location>
        <location>Extracellular space</location>
        <location>Extracellular matrix</location>
    </subcellularLocation>
</comment>
<comment type="PTM">
    <text evidence="1 3">Palmitoleoylation is required for efficient binding to frizzled receptors. Depalmitoleoylation leads to Wnt signaling pathway inhibition.</text>
</comment>
<comment type="similarity">
    <text evidence="5">Belongs to the Wnt family.</text>
</comment>
<proteinExistence type="inferred from homology"/>
<evidence type="ECO:0000250" key="1">
    <source>
        <dbReference type="UniProtKB" id="P27467"/>
    </source>
</evidence>
<evidence type="ECO:0000250" key="2">
    <source>
        <dbReference type="UniProtKB" id="P28026"/>
    </source>
</evidence>
<evidence type="ECO:0000250" key="3">
    <source>
        <dbReference type="UniProtKB" id="P56704"/>
    </source>
</evidence>
<evidence type="ECO:0000255" key="4"/>
<evidence type="ECO:0000305" key="5"/>
<protein>
    <recommendedName>
        <fullName>Protein Wnt-5(III)</fullName>
    </recommendedName>
</protein>
<reference key="1">
    <citation type="journal article" date="1992" name="Proc. Natl. Acad. Sci. U.S.A.">
        <title>Diversification of the Wnt gene family on the ancestral lineage of vertebrates.</title>
        <authorList>
            <person name="Sidow A."/>
        </authorList>
    </citation>
    <scope>NUCLEOTIDE SEQUENCE [GENOMIC DNA]</scope>
</reference>